<accession>Q3Z6N2</accession>
<organism>
    <name type="scientific">Dehalococcoides mccartyi (strain ATCC BAA-2266 / KCTC 15142 / 195)</name>
    <name type="common">Dehalococcoides ethenogenes (strain 195)</name>
    <dbReference type="NCBI Taxonomy" id="243164"/>
    <lineage>
        <taxon>Bacteria</taxon>
        <taxon>Bacillati</taxon>
        <taxon>Chloroflexota</taxon>
        <taxon>Dehalococcoidia</taxon>
        <taxon>Dehalococcoidales</taxon>
        <taxon>Dehalococcoidaceae</taxon>
        <taxon>Dehalococcoides</taxon>
    </lineage>
</organism>
<gene>
    <name evidence="1" type="primary">tal</name>
    <name type="ordered locus">DET1409</name>
</gene>
<dbReference type="EC" id="2.2.1.2" evidence="1"/>
<dbReference type="EMBL" id="CP000027">
    <property type="protein sequence ID" value="AAW39333.1"/>
    <property type="molecule type" value="Genomic_DNA"/>
</dbReference>
<dbReference type="SMR" id="Q3Z6N2"/>
<dbReference type="FunCoup" id="Q3Z6N2">
    <property type="interactions" value="210"/>
</dbReference>
<dbReference type="STRING" id="243164.DET1409"/>
<dbReference type="GeneID" id="3229291"/>
<dbReference type="KEGG" id="det:DET1409"/>
<dbReference type="eggNOG" id="COG0176">
    <property type="taxonomic scope" value="Bacteria"/>
</dbReference>
<dbReference type="HOGENOM" id="CLU_079764_0_0_0"/>
<dbReference type="InParanoid" id="Q3Z6N2"/>
<dbReference type="UniPathway" id="UPA00115">
    <property type="reaction ID" value="UER00414"/>
</dbReference>
<dbReference type="Proteomes" id="UP000008289">
    <property type="component" value="Chromosome"/>
</dbReference>
<dbReference type="GO" id="GO:0005737">
    <property type="term" value="C:cytoplasm"/>
    <property type="evidence" value="ECO:0007669"/>
    <property type="project" value="UniProtKB-SubCell"/>
</dbReference>
<dbReference type="GO" id="GO:0016832">
    <property type="term" value="F:aldehyde-lyase activity"/>
    <property type="evidence" value="ECO:0007669"/>
    <property type="project" value="InterPro"/>
</dbReference>
<dbReference type="GO" id="GO:0004801">
    <property type="term" value="F:transaldolase activity"/>
    <property type="evidence" value="ECO:0007669"/>
    <property type="project" value="UniProtKB-UniRule"/>
</dbReference>
<dbReference type="GO" id="GO:0005975">
    <property type="term" value="P:carbohydrate metabolic process"/>
    <property type="evidence" value="ECO:0007669"/>
    <property type="project" value="InterPro"/>
</dbReference>
<dbReference type="GO" id="GO:0006098">
    <property type="term" value="P:pentose-phosphate shunt"/>
    <property type="evidence" value="ECO:0007669"/>
    <property type="project" value="UniProtKB-UniRule"/>
</dbReference>
<dbReference type="CDD" id="cd00956">
    <property type="entry name" value="Transaldolase_FSA"/>
    <property type="match status" value="1"/>
</dbReference>
<dbReference type="FunFam" id="3.20.20.70:FF:000018">
    <property type="entry name" value="Probable transaldolase"/>
    <property type="match status" value="1"/>
</dbReference>
<dbReference type="Gene3D" id="3.20.20.70">
    <property type="entry name" value="Aldolase class I"/>
    <property type="match status" value="1"/>
</dbReference>
<dbReference type="HAMAP" id="MF_00494">
    <property type="entry name" value="Transaldolase_3b"/>
    <property type="match status" value="1"/>
</dbReference>
<dbReference type="InterPro" id="IPR013785">
    <property type="entry name" value="Aldolase_TIM"/>
</dbReference>
<dbReference type="InterPro" id="IPR001585">
    <property type="entry name" value="TAL/FSA"/>
</dbReference>
<dbReference type="InterPro" id="IPR022999">
    <property type="entry name" value="Transaldolase_3B"/>
</dbReference>
<dbReference type="InterPro" id="IPR004731">
    <property type="entry name" value="Transaldolase_3B/F6P_aldolase"/>
</dbReference>
<dbReference type="InterPro" id="IPR018225">
    <property type="entry name" value="Transaldolase_AS"/>
</dbReference>
<dbReference type="InterPro" id="IPR033919">
    <property type="entry name" value="TSA/FSA_arc/bac"/>
</dbReference>
<dbReference type="NCBIfam" id="TIGR00875">
    <property type="entry name" value="fsa_talC_mipB"/>
    <property type="match status" value="1"/>
</dbReference>
<dbReference type="PANTHER" id="PTHR10683:SF40">
    <property type="entry name" value="FRUCTOSE-6-PHOSPHATE ALDOLASE 1-RELATED"/>
    <property type="match status" value="1"/>
</dbReference>
<dbReference type="PANTHER" id="PTHR10683">
    <property type="entry name" value="TRANSALDOLASE"/>
    <property type="match status" value="1"/>
</dbReference>
<dbReference type="Pfam" id="PF00923">
    <property type="entry name" value="TAL_FSA"/>
    <property type="match status" value="1"/>
</dbReference>
<dbReference type="SUPFAM" id="SSF51569">
    <property type="entry name" value="Aldolase"/>
    <property type="match status" value="1"/>
</dbReference>
<dbReference type="PROSITE" id="PS01054">
    <property type="entry name" value="TRANSALDOLASE_1"/>
    <property type="match status" value="1"/>
</dbReference>
<protein>
    <recommendedName>
        <fullName evidence="1">Probable transaldolase</fullName>
        <ecNumber evidence="1">2.2.1.2</ecNumber>
    </recommendedName>
</protein>
<name>TAL_DEHM1</name>
<feature type="chain" id="PRO_1000126305" description="Probable transaldolase">
    <location>
        <begin position="1"/>
        <end position="216"/>
    </location>
</feature>
<feature type="active site" description="Schiff-base intermediate with substrate" evidence="1">
    <location>
        <position position="85"/>
    </location>
</feature>
<proteinExistence type="inferred from homology"/>
<reference key="1">
    <citation type="journal article" date="2005" name="Science">
        <title>Genome sequence of the PCE-dechlorinating bacterium Dehalococcoides ethenogenes.</title>
        <authorList>
            <person name="Seshadri R."/>
            <person name="Adrian L."/>
            <person name="Fouts D.E."/>
            <person name="Eisen J.A."/>
            <person name="Phillippy A.M."/>
            <person name="Methe B.A."/>
            <person name="Ward N.L."/>
            <person name="Nelson W.C."/>
            <person name="DeBoy R.T."/>
            <person name="Khouri H.M."/>
            <person name="Kolonay J.F."/>
            <person name="Dodson R.J."/>
            <person name="Daugherty S.C."/>
            <person name="Brinkac L.M."/>
            <person name="Sullivan S.A."/>
            <person name="Madupu R."/>
            <person name="Nelson K.E."/>
            <person name="Kang K.H."/>
            <person name="Impraim M."/>
            <person name="Tran K."/>
            <person name="Robinson J.M."/>
            <person name="Forberger H.A."/>
            <person name="Fraser C.M."/>
            <person name="Zinder S.H."/>
            <person name="Heidelberg J.F."/>
        </authorList>
    </citation>
    <scope>NUCLEOTIDE SEQUENCE [LARGE SCALE GENOMIC DNA]</scope>
    <source>
        <strain>ATCC BAA-2266 / KCTC 15142 / 195</strain>
    </source>
</reference>
<comment type="function">
    <text evidence="1">Transaldolase is important for the balance of metabolites in the pentose-phosphate pathway.</text>
</comment>
<comment type="catalytic activity">
    <reaction evidence="1">
        <text>D-sedoheptulose 7-phosphate + D-glyceraldehyde 3-phosphate = D-erythrose 4-phosphate + beta-D-fructose 6-phosphate</text>
        <dbReference type="Rhea" id="RHEA:17053"/>
        <dbReference type="ChEBI" id="CHEBI:16897"/>
        <dbReference type="ChEBI" id="CHEBI:57483"/>
        <dbReference type="ChEBI" id="CHEBI:57634"/>
        <dbReference type="ChEBI" id="CHEBI:59776"/>
        <dbReference type="EC" id="2.2.1.2"/>
    </reaction>
</comment>
<comment type="pathway">
    <text evidence="1">Carbohydrate degradation; pentose phosphate pathway; D-glyceraldehyde 3-phosphate and beta-D-fructose 6-phosphate from D-ribose 5-phosphate and D-xylulose 5-phosphate (non-oxidative stage): step 2/3.</text>
</comment>
<comment type="subcellular location">
    <subcellularLocation>
        <location evidence="1">Cytoplasm</location>
    </subcellularLocation>
</comment>
<comment type="similarity">
    <text evidence="1">Belongs to the transaldolase family. Type 3B subfamily.</text>
</comment>
<evidence type="ECO:0000255" key="1">
    <source>
        <dbReference type="HAMAP-Rule" id="MF_00494"/>
    </source>
</evidence>
<keyword id="KW-0963">Cytoplasm</keyword>
<keyword id="KW-0570">Pentose shunt</keyword>
<keyword id="KW-0704">Schiff base</keyword>
<keyword id="KW-0808">Transferase</keyword>
<sequence>MRIFLDTANIEEIKKGLKLGVVSGVTTNPTLVAKEGISDYKSVVQQICALLPEGDVSAEITAEDPAEMLKQAREIAKWAPNVVVKIPATAEGLEIISKLSKEGVRFNMTLCFSVNQALLGALAGAAFVSPFVGRLDDAGHDGMMLINDIVSIYKEYGFETQVIAASIRHPLHCTQAAQTGAGIATVPYKVLMQMMQHPLTDSGIARFMADWKSVQK</sequence>